<keyword id="KW-0560">Oxidoreductase</keyword>
<keyword id="KW-0819">tRNA processing</keyword>
<gene>
    <name evidence="2" type="primary">trhO</name>
    <name type="synonym">yceA</name>
    <name type="ordered locus">EcSMS35_2075</name>
</gene>
<dbReference type="EC" id="1.14.-.-" evidence="2"/>
<dbReference type="EMBL" id="CP000970">
    <property type="protein sequence ID" value="ACB16690.1"/>
    <property type="molecule type" value="Genomic_DNA"/>
</dbReference>
<dbReference type="RefSeq" id="WP_012311678.1">
    <property type="nucleotide sequence ID" value="NC_010498.1"/>
</dbReference>
<dbReference type="SMR" id="B1LIV6"/>
<dbReference type="KEGG" id="ecm:EcSMS35_2075"/>
<dbReference type="HOGENOM" id="CLU_038878_1_1_6"/>
<dbReference type="Proteomes" id="UP000007011">
    <property type="component" value="Chromosome"/>
</dbReference>
<dbReference type="GO" id="GO:0016705">
    <property type="term" value="F:oxidoreductase activity, acting on paired donors, with incorporation or reduction of molecular oxygen"/>
    <property type="evidence" value="ECO:0007669"/>
    <property type="project" value="UniProtKB-UniRule"/>
</dbReference>
<dbReference type="GO" id="GO:0006400">
    <property type="term" value="P:tRNA modification"/>
    <property type="evidence" value="ECO:0007669"/>
    <property type="project" value="UniProtKB-UniRule"/>
</dbReference>
<dbReference type="CDD" id="cd01518">
    <property type="entry name" value="RHOD_YceA"/>
    <property type="match status" value="1"/>
</dbReference>
<dbReference type="Gene3D" id="3.30.70.100">
    <property type="match status" value="1"/>
</dbReference>
<dbReference type="Gene3D" id="3.40.250.10">
    <property type="entry name" value="Rhodanese-like domain"/>
    <property type="match status" value="1"/>
</dbReference>
<dbReference type="HAMAP" id="MF_00469">
    <property type="entry name" value="TrhO"/>
    <property type="match status" value="1"/>
</dbReference>
<dbReference type="InterPro" id="IPR001763">
    <property type="entry name" value="Rhodanese-like_dom"/>
</dbReference>
<dbReference type="InterPro" id="IPR036873">
    <property type="entry name" value="Rhodanese-like_dom_sf"/>
</dbReference>
<dbReference type="InterPro" id="IPR022111">
    <property type="entry name" value="Rhodanese_C"/>
</dbReference>
<dbReference type="InterPro" id="IPR020936">
    <property type="entry name" value="TrhO"/>
</dbReference>
<dbReference type="InterPro" id="IPR040503">
    <property type="entry name" value="TRHO_N"/>
</dbReference>
<dbReference type="NCBIfam" id="NF001133">
    <property type="entry name" value="PRK00142.1-1"/>
    <property type="match status" value="1"/>
</dbReference>
<dbReference type="PANTHER" id="PTHR43846:SF1">
    <property type="entry name" value="TRNA URIDINE(34) HYDROXYLASE"/>
    <property type="match status" value="1"/>
</dbReference>
<dbReference type="PANTHER" id="PTHR43846">
    <property type="entry name" value="UPF0176 PROTEIN YCEA"/>
    <property type="match status" value="1"/>
</dbReference>
<dbReference type="Pfam" id="PF00581">
    <property type="entry name" value="Rhodanese"/>
    <property type="match status" value="1"/>
</dbReference>
<dbReference type="Pfam" id="PF12368">
    <property type="entry name" value="Rhodanese_C"/>
    <property type="match status" value="1"/>
</dbReference>
<dbReference type="Pfam" id="PF17773">
    <property type="entry name" value="UPF0176_N"/>
    <property type="match status" value="1"/>
</dbReference>
<dbReference type="SMART" id="SM00450">
    <property type="entry name" value="RHOD"/>
    <property type="match status" value="1"/>
</dbReference>
<dbReference type="SUPFAM" id="SSF52821">
    <property type="entry name" value="Rhodanese/Cell cycle control phosphatase"/>
    <property type="match status" value="1"/>
</dbReference>
<dbReference type="PROSITE" id="PS50206">
    <property type="entry name" value="RHODANESE_3"/>
    <property type="match status" value="1"/>
</dbReference>
<protein>
    <recommendedName>
        <fullName evidence="2">tRNA uridine(34) hydroxylase</fullName>
        <ecNumber evidence="2">1.14.-.-</ecNumber>
    </recommendedName>
    <alternativeName>
        <fullName evidence="2">tRNA hydroxylation protein O</fullName>
    </alternativeName>
</protein>
<comment type="function">
    <text evidence="1">Catalyzes oxygen-dependent 5-hydroxyuridine (ho5U) modification at position 34 in tRNAs, the first step in 5-carboxymethoxyuridine (cmo5U) biosynthesis. May be part of an alternate pathway, which is able to bypass cmo5U biogenesis in a subset of tRNAs under aerobic conditions.</text>
</comment>
<comment type="catalytic activity">
    <reaction evidence="2">
        <text>uridine(34) in tRNA + AH2 + O2 = 5-hydroxyuridine(34) in tRNA + A + H2O</text>
        <dbReference type="Rhea" id="RHEA:64224"/>
        <dbReference type="Rhea" id="RHEA-COMP:11727"/>
        <dbReference type="Rhea" id="RHEA-COMP:13381"/>
        <dbReference type="ChEBI" id="CHEBI:13193"/>
        <dbReference type="ChEBI" id="CHEBI:15377"/>
        <dbReference type="ChEBI" id="CHEBI:15379"/>
        <dbReference type="ChEBI" id="CHEBI:17499"/>
        <dbReference type="ChEBI" id="CHEBI:65315"/>
        <dbReference type="ChEBI" id="CHEBI:136877"/>
    </reaction>
</comment>
<comment type="similarity">
    <text evidence="2">Belongs to the TrhO family.</text>
</comment>
<name>TRHO_ECOSM</name>
<reference key="1">
    <citation type="journal article" date="2008" name="J. Bacteriol.">
        <title>Insights into the environmental resistance gene pool from the genome sequence of the multidrug-resistant environmental isolate Escherichia coli SMS-3-5.</title>
        <authorList>
            <person name="Fricke W.F."/>
            <person name="Wright M.S."/>
            <person name="Lindell A.H."/>
            <person name="Harkins D.M."/>
            <person name="Baker-Austin C."/>
            <person name="Ravel J."/>
            <person name="Stepanauskas R."/>
        </authorList>
    </citation>
    <scope>NUCLEOTIDE SEQUENCE [LARGE SCALE GENOMIC DNA]</scope>
    <source>
        <strain>SMS-3-5 / SECEC</strain>
    </source>
</reference>
<feature type="chain" id="PRO_1000200355" description="tRNA uridine(34) hydroxylase">
    <location>
        <begin position="1"/>
        <end position="350"/>
    </location>
</feature>
<feature type="domain" description="Rhodanese" evidence="2">
    <location>
        <begin position="146"/>
        <end position="240"/>
    </location>
</feature>
<feature type="active site" description="Cysteine persulfide intermediate" evidence="2">
    <location>
        <position position="200"/>
    </location>
</feature>
<sequence length="350" mass="39749">MPVLHNRISNDALKAKMLAESEPRTTISFYKYFHIADPKATRDALYQLFTALNVFGRVYLAHEGINAQISVPASNVETFRAQLYAFDPALEGLRLNIALEDDGKSFWVLRMKVRDRIVADGIDDPHFDASNVGEYLQAAEVNAMLDDPDALFIDMRNHYEYEVGHFENALEIPADTFREQLPKAVEMMQAHKDKKIVMYCTGGIRCEKASAWMKHNGFNKVWHIEGGIIEYARKAREQGLPVRFIGKNFVFDERMGERISDEIIAHCHQCGAPCDSHTNCKNDGCHLLFIQCPVCAEKYKGCCSEICCEESALPPEEQRRRRAGRENGNKIFNKSRGRLNTTLGIPDPTE</sequence>
<evidence type="ECO:0000250" key="1">
    <source>
        <dbReference type="UniProtKB" id="P24188"/>
    </source>
</evidence>
<evidence type="ECO:0000255" key="2">
    <source>
        <dbReference type="HAMAP-Rule" id="MF_00469"/>
    </source>
</evidence>
<proteinExistence type="inferred from homology"/>
<accession>B1LIV6</accession>
<organism>
    <name type="scientific">Escherichia coli (strain SMS-3-5 / SECEC)</name>
    <dbReference type="NCBI Taxonomy" id="439855"/>
    <lineage>
        <taxon>Bacteria</taxon>
        <taxon>Pseudomonadati</taxon>
        <taxon>Pseudomonadota</taxon>
        <taxon>Gammaproteobacteria</taxon>
        <taxon>Enterobacterales</taxon>
        <taxon>Enterobacteriaceae</taxon>
        <taxon>Escherichia</taxon>
    </lineage>
</organism>